<evidence type="ECO:0000255" key="1"/>
<evidence type="ECO:0000305" key="2"/>
<accession>Q9YDX4</accession>
<organism>
    <name type="scientific">Aeropyrum pernix (strain ATCC 700893 / DSM 11879 / JCM 9820 / NBRC 100138 / K1)</name>
    <dbReference type="NCBI Taxonomy" id="272557"/>
    <lineage>
        <taxon>Archaea</taxon>
        <taxon>Thermoproteota</taxon>
        <taxon>Thermoprotei</taxon>
        <taxon>Desulfurococcales</taxon>
        <taxon>Desulfurococcaceae</taxon>
        <taxon>Aeropyrum</taxon>
    </lineage>
</organism>
<comment type="subcellular location">
    <subcellularLocation>
        <location evidence="2">Cell membrane</location>
        <topology evidence="2">Multi-pass membrane protein</topology>
    </subcellularLocation>
</comment>
<proteinExistence type="predicted"/>
<gene>
    <name type="primary">aoxC</name>
    <name type="ordered locus">APE_0795.1</name>
</gene>
<dbReference type="EC" id="1.9.3.-"/>
<dbReference type="EMBL" id="AB020482">
    <property type="protein sequence ID" value="BAA86073.1"/>
    <property type="molecule type" value="Genomic_DNA"/>
</dbReference>
<dbReference type="EMBL" id="BA000002">
    <property type="protein sequence ID" value="BAA79773.2"/>
    <property type="molecule type" value="Genomic_DNA"/>
</dbReference>
<dbReference type="PIR" id="E72671">
    <property type="entry name" value="E72671"/>
</dbReference>
<dbReference type="RefSeq" id="WP_010865980.1">
    <property type="nucleotide sequence ID" value="NC_000854.2"/>
</dbReference>
<dbReference type="SMR" id="Q9YDX4"/>
<dbReference type="STRING" id="272557.APE_0795.1"/>
<dbReference type="EnsemblBacteria" id="BAA79773">
    <property type="protein sequence ID" value="BAA79773"/>
    <property type="gene ID" value="APE_0795.1"/>
</dbReference>
<dbReference type="GeneID" id="43496821"/>
<dbReference type="KEGG" id="ape:APE_0795.1"/>
<dbReference type="eggNOG" id="arCOG15028">
    <property type="taxonomic scope" value="Archaea"/>
</dbReference>
<dbReference type="Proteomes" id="UP000002518">
    <property type="component" value="Chromosome"/>
</dbReference>
<dbReference type="GO" id="GO:0005886">
    <property type="term" value="C:plasma membrane"/>
    <property type="evidence" value="ECO:0007669"/>
    <property type="project" value="UniProtKB-SubCell"/>
</dbReference>
<dbReference type="GO" id="GO:0016491">
    <property type="term" value="F:oxidoreductase activity"/>
    <property type="evidence" value="ECO:0007669"/>
    <property type="project" value="UniProtKB-KW"/>
</dbReference>
<dbReference type="InterPro" id="IPR005171">
    <property type="entry name" value="Cyt_c_oxidase_su4_prok"/>
</dbReference>
<dbReference type="Pfam" id="PF03626">
    <property type="entry name" value="COX4_pro"/>
    <property type="match status" value="1"/>
</dbReference>
<protein>
    <recommendedName>
        <fullName>Heme-copper oxidase subunit 4</fullName>
        <ecNumber>1.9.3.-</ecNumber>
    </recommendedName>
    <alternativeName>
        <fullName>Heme-copper oxidase subunit IV</fullName>
    </alternativeName>
</protein>
<feature type="chain" id="PRO_0000183906" description="Heme-copper oxidase subunit 4">
    <location>
        <begin position="1"/>
        <end position="103"/>
    </location>
</feature>
<feature type="transmembrane region" description="Helical" evidence="1">
    <location>
        <begin position="20"/>
        <end position="40"/>
    </location>
</feature>
<feature type="transmembrane region" description="Helical" evidence="1">
    <location>
        <begin position="42"/>
        <end position="62"/>
    </location>
</feature>
<feature type="transmembrane region" description="Helical" evidence="1">
    <location>
        <begin position="75"/>
        <end position="95"/>
    </location>
</feature>
<sequence>MASGGGFEDLAREAAKYFGVWIVLVASAVAEVYLVLEGIARNPFVFVLAVALFQSSLIALFFQHLRDEPIIIRGITVSGAVLIAILIISAVTSVLTCTPYFPG</sequence>
<reference key="1">
    <citation type="submission" date="1998-11" db="EMBL/GenBank/DDBJ databases">
        <title>Heme-copper-oxidase.</title>
        <authorList>
            <person name="Wakagi T."/>
            <person name="Ishikawa R."/>
        </authorList>
    </citation>
    <scope>NUCLEOTIDE SEQUENCE [GENOMIC DNA]</scope>
    <source>
        <strain>ATCC 700893 / DSM 11879 / JCM 9820 / NBRC 100138 / K1</strain>
    </source>
</reference>
<reference key="2">
    <citation type="journal article" date="1999" name="DNA Res.">
        <title>Complete genome sequence of an aerobic hyper-thermophilic crenarchaeon, Aeropyrum pernix K1.</title>
        <authorList>
            <person name="Kawarabayasi Y."/>
            <person name="Hino Y."/>
            <person name="Horikawa H."/>
            <person name="Yamazaki S."/>
            <person name="Haikawa Y."/>
            <person name="Jin-no K."/>
            <person name="Takahashi M."/>
            <person name="Sekine M."/>
            <person name="Baba S."/>
            <person name="Ankai A."/>
            <person name="Kosugi H."/>
            <person name="Hosoyama A."/>
            <person name="Fukui S."/>
            <person name="Nagai Y."/>
            <person name="Nishijima K."/>
            <person name="Nakazawa H."/>
            <person name="Takamiya M."/>
            <person name="Masuda S."/>
            <person name="Funahashi T."/>
            <person name="Tanaka T."/>
            <person name="Kudoh Y."/>
            <person name="Yamazaki J."/>
            <person name="Kushida N."/>
            <person name="Oguchi A."/>
            <person name="Aoki K."/>
            <person name="Kubota K."/>
            <person name="Nakamura Y."/>
            <person name="Nomura N."/>
            <person name="Sako Y."/>
            <person name="Kikuchi H."/>
        </authorList>
    </citation>
    <scope>NUCLEOTIDE SEQUENCE [LARGE SCALE GENOMIC DNA]</scope>
    <source>
        <strain>ATCC 700893 / DSM 11879 / JCM 9820 / NBRC 100138 / K1</strain>
    </source>
</reference>
<keyword id="KW-1003">Cell membrane</keyword>
<keyword id="KW-0249">Electron transport</keyword>
<keyword id="KW-0472">Membrane</keyword>
<keyword id="KW-0560">Oxidoreductase</keyword>
<keyword id="KW-1185">Reference proteome</keyword>
<keyword id="KW-0679">Respiratory chain</keyword>
<keyword id="KW-0812">Transmembrane</keyword>
<keyword id="KW-1133">Transmembrane helix</keyword>
<keyword id="KW-0813">Transport</keyword>
<name>AOX4_AERPE</name>